<keyword id="KW-0067">ATP-binding</keyword>
<keyword id="KW-0315">Glutamine amidotransferase</keyword>
<keyword id="KW-0436">Ligase</keyword>
<keyword id="KW-0460">Magnesium</keyword>
<keyword id="KW-0479">Metal-binding</keyword>
<keyword id="KW-0547">Nucleotide-binding</keyword>
<keyword id="KW-0665">Pyrimidine biosynthesis</keyword>
<keyword id="KW-1185">Reference proteome</keyword>
<feature type="chain" id="PRO_0000266089" description="CTP synthase">
    <location>
        <begin position="1"/>
        <end position="535"/>
    </location>
</feature>
<feature type="domain" description="Glutamine amidotransferase type-1" evidence="1">
    <location>
        <begin position="292"/>
        <end position="534"/>
    </location>
</feature>
<feature type="region of interest" description="Amidoligase domain" evidence="1">
    <location>
        <begin position="1"/>
        <end position="267"/>
    </location>
</feature>
<feature type="active site" description="Nucleophile; for glutamine hydrolysis" evidence="1">
    <location>
        <position position="381"/>
    </location>
</feature>
<feature type="active site" evidence="1">
    <location>
        <position position="507"/>
    </location>
</feature>
<feature type="active site" evidence="1">
    <location>
        <position position="509"/>
    </location>
</feature>
<feature type="binding site" evidence="1">
    <location>
        <position position="13"/>
    </location>
    <ligand>
        <name>CTP</name>
        <dbReference type="ChEBI" id="CHEBI:37563"/>
        <note>allosteric inhibitor</note>
    </ligand>
</feature>
<feature type="binding site" evidence="1">
    <location>
        <position position="13"/>
    </location>
    <ligand>
        <name>UTP</name>
        <dbReference type="ChEBI" id="CHEBI:46398"/>
    </ligand>
</feature>
<feature type="binding site" evidence="1">
    <location>
        <begin position="14"/>
        <end position="19"/>
    </location>
    <ligand>
        <name>ATP</name>
        <dbReference type="ChEBI" id="CHEBI:30616"/>
    </ligand>
</feature>
<feature type="binding site" evidence="1">
    <location>
        <position position="54"/>
    </location>
    <ligand>
        <name>L-glutamine</name>
        <dbReference type="ChEBI" id="CHEBI:58359"/>
    </ligand>
</feature>
<feature type="binding site" evidence="1">
    <location>
        <position position="71"/>
    </location>
    <ligand>
        <name>ATP</name>
        <dbReference type="ChEBI" id="CHEBI:30616"/>
    </ligand>
</feature>
<feature type="binding site" evidence="1">
    <location>
        <position position="71"/>
    </location>
    <ligand>
        <name>Mg(2+)</name>
        <dbReference type="ChEBI" id="CHEBI:18420"/>
    </ligand>
</feature>
<feature type="binding site" evidence="1">
    <location>
        <position position="141"/>
    </location>
    <ligand>
        <name>Mg(2+)</name>
        <dbReference type="ChEBI" id="CHEBI:18420"/>
    </ligand>
</feature>
<feature type="binding site" evidence="1">
    <location>
        <begin position="148"/>
        <end position="150"/>
    </location>
    <ligand>
        <name>CTP</name>
        <dbReference type="ChEBI" id="CHEBI:37563"/>
        <note>allosteric inhibitor</note>
    </ligand>
</feature>
<feature type="binding site" evidence="1">
    <location>
        <begin position="188"/>
        <end position="193"/>
    </location>
    <ligand>
        <name>CTP</name>
        <dbReference type="ChEBI" id="CHEBI:37563"/>
        <note>allosteric inhibitor</note>
    </ligand>
</feature>
<feature type="binding site" evidence="1">
    <location>
        <begin position="188"/>
        <end position="193"/>
    </location>
    <ligand>
        <name>UTP</name>
        <dbReference type="ChEBI" id="CHEBI:46398"/>
    </ligand>
</feature>
<feature type="binding site" evidence="1">
    <location>
        <position position="224"/>
    </location>
    <ligand>
        <name>CTP</name>
        <dbReference type="ChEBI" id="CHEBI:37563"/>
        <note>allosteric inhibitor</note>
    </ligand>
</feature>
<feature type="binding site" evidence="1">
    <location>
        <position position="224"/>
    </location>
    <ligand>
        <name>UTP</name>
        <dbReference type="ChEBI" id="CHEBI:46398"/>
    </ligand>
</feature>
<feature type="binding site" evidence="1">
    <location>
        <position position="354"/>
    </location>
    <ligand>
        <name>L-glutamine</name>
        <dbReference type="ChEBI" id="CHEBI:58359"/>
    </ligand>
</feature>
<feature type="binding site" evidence="1">
    <location>
        <begin position="382"/>
        <end position="385"/>
    </location>
    <ligand>
        <name>L-glutamine</name>
        <dbReference type="ChEBI" id="CHEBI:58359"/>
    </ligand>
</feature>
<feature type="binding site" evidence="1">
    <location>
        <position position="405"/>
    </location>
    <ligand>
        <name>L-glutamine</name>
        <dbReference type="ChEBI" id="CHEBI:58359"/>
    </ligand>
</feature>
<feature type="binding site" evidence="1">
    <location>
        <position position="462"/>
    </location>
    <ligand>
        <name>L-glutamine</name>
        <dbReference type="ChEBI" id="CHEBI:58359"/>
    </ligand>
</feature>
<evidence type="ECO:0000255" key="1">
    <source>
        <dbReference type="HAMAP-Rule" id="MF_01227"/>
    </source>
</evidence>
<accession>Q3AFT7</accession>
<dbReference type="EC" id="6.3.4.2" evidence="1"/>
<dbReference type="EMBL" id="CP000141">
    <property type="protein sequence ID" value="ABB15381.1"/>
    <property type="molecule type" value="Genomic_DNA"/>
</dbReference>
<dbReference type="RefSeq" id="WP_011343073.1">
    <property type="nucleotide sequence ID" value="NC_007503.1"/>
</dbReference>
<dbReference type="SMR" id="Q3AFT7"/>
<dbReference type="FunCoup" id="Q3AFT7">
    <property type="interactions" value="432"/>
</dbReference>
<dbReference type="STRING" id="246194.CHY_0125"/>
<dbReference type="MEROPS" id="C26.964"/>
<dbReference type="KEGG" id="chy:CHY_0125"/>
<dbReference type="eggNOG" id="COG0504">
    <property type="taxonomic scope" value="Bacteria"/>
</dbReference>
<dbReference type="HOGENOM" id="CLU_011675_5_0_9"/>
<dbReference type="InParanoid" id="Q3AFT7"/>
<dbReference type="OrthoDB" id="9801107at2"/>
<dbReference type="UniPathway" id="UPA00159">
    <property type="reaction ID" value="UER00277"/>
</dbReference>
<dbReference type="Proteomes" id="UP000002706">
    <property type="component" value="Chromosome"/>
</dbReference>
<dbReference type="GO" id="GO:0005829">
    <property type="term" value="C:cytosol"/>
    <property type="evidence" value="ECO:0007669"/>
    <property type="project" value="TreeGrafter"/>
</dbReference>
<dbReference type="GO" id="GO:0005524">
    <property type="term" value="F:ATP binding"/>
    <property type="evidence" value="ECO:0007669"/>
    <property type="project" value="UniProtKB-KW"/>
</dbReference>
<dbReference type="GO" id="GO:0003883">
    <property type="term" value="F:CTP synthase activity"/>
    <property type="evidence" value="ECO:0007669"/>
    <property type="project" value="UniProtKB-UniRule"/>
</dbReference>
<dbReference type="GO" id="GO:0004359">
    <property type="term" value="F:glutaminase activity"/>
    <property type="evidence" value="ECO:0007669"/>
    <property type="project" value="RHEA"/>
</dbReference>
<dbReference type="GO" id="GO:0042802">
    <property type="term" value="F:identical protein binding"/>
    <property type="evidence" value="ECO:0007669"/>
    <property type="project" value="TreeGrafter"/>
</dbReference>
<dbReference type="GO" id="GO:0046872">
    <property type="term" value="F:metal ion binding"/>
    <property type="evidence" value="ECO:0007669"/>
    <property type="project" value="UniProtKB-KW"/>
</dbReference>
<dbReference type="GO" id="GO:0044210">
    <property type="term" value="P:'de novo' CTP biosynthetic process"/>
    <property type="evidence" value="ECO:0007669"/>
    <property type="project" value="UniProtKB-UniRule"/>
</dbReference>
<dbReference type="GO" id="GO:0019856">
    <property type="term" value="P:pyrimidine nucleobase biosynthetic process"/>
    <property type="evidence" value="ECO:0007669"/>
    <property type="project" value="TreeGrafter"/>
</dbReference>
<dbReference type="CDD" id="cd03113">
    <property type="entry name" value="CTPS_N"/>
    <property type="match status" value="1"/>
</dbReference>
<dbReference type="CDD" id="cd01746">
    <property type="entry name" value="GATase1_CTP_Synthase"/>
    <property type="match status" value="1"/>
</dbReference>
<dbReference type="FunFam" id="3.40.50.300:FF:000009">
    <property type="entry name" value="CTP synthase"/>
    <property type="match status" value="1"/>
</dbReference>
<dbReference type="FunFam" id="3.40.50.880:FF:000002">
    <property type="entry name" value="CTP synthase"/>
    <property type="match status" value="1"/>
</dbReference>
<dbReference type="Gene3D" id="3.40.50.880">
    <property type="match status" value="1"/>
</dbReference>
<dbReference type="Gene3D" id="3.40.50.300">
    <property type="entry name" value="P-loop containing nucleotide triphosphate hydrolases"/>
    <property type="match status" value="1"/>
</dbReference>
<dbReference type="HAMAP" id="MF_01227">
    <property type="entry name" value="PyrG"/>
    <property type="match status" value="1"/>
</dbReference>
<dbReference type="InterPro" id="IPR029062">
    <property type="entry name" value="Class_I_gatase-like"/>
</dbReference>
<dbReference type="InterPro" id="IPR004468">
    <property type="entry name" value="CTP_synthase"/>
</dbReference>
<dbReference type="InterPro" id="IPR017456">
    <property type="entry name" value="CTP_synthase_N"/>
</dbReference>
<dbReference type="InterPro" id="IPR017926">
    <property type="entry name" value="GATASE"/>
</dbReference>
<dbReference type="InterPro" id="IPR033828">
    <property type="entry name" value="GATase1_CTP_Synthase"/>
</dbReference>
<dbReference type="InterPro" id="IPR027417">
    <property type="entry name" value="P-loop_NTPase"/>
</dbReference>
<dbReference type="NCBIfam" id="NF003792">
    <property type="entry name" value="PRK05380.1"/>
    <property type="match status" value="1"/>
</dbReference>
<dbReference type="NCBIfam" id="TIGR00337">
    <property type="entry name" value="PyrG"/>
    <property type="match status" value="1"/>
</dbReference>
<dbReference type="PANTHER" id="PTHR11550">
    <property type="entry name" value="CTP SYNTHASE"/>
    <property type="match status" value="1"/>
</dbReference>
<dbReference type="PANTHER" id="PTHR11550:SF0">
    <property type="entry name" value="CTP SYNTHASE-RELATED"/>
    <property type="match status" value="1"/>
</dbReference>
<dbReference type="Pfam" id="PF06418">
    <property type="entry name" value="CTP_synth_N"/>
    <property type="match status" value="1"/>
</dbReference>
<dbReference type="Pfam" id="PF00117">
    <property type="entry name" value="GATase"/>
    <property type="match status" value="1"/>
</dbReference>
<dbReference type="SUPFAM" id="SSF52317">
    <property type="entry name" value="Class I glutamine amidotransferase-like"/>
    <property type="match status" value="1"/>
</dbReference>
<dbReference type="SUPFAM" id="SSF52540">
    <property type="entry name" value="P-loop containing nucleoside triphosphate hydrolases"/>
    <property type="match status" value="1"/>
</dbReference>
<dbReference type="PROSITE" id="PS51273">
    <property type="entry name" value="GATASE_TYPE_1"/>
    <property type="match status" value="1"/>
</dbReference>
<comment type="function">
    <text evidence="1">Catalyzes the ATP-dependent amination of UTP to CTP with either L-glutamine or ammonia as the source of nitrogen. Regulates intracellular CTP levels through interactions with the four ribonucleotide triphosphates.</text>
</comment>
<comment type="catalytic activity">
    <reaction evidence="1">
        <text>UTP + L-glutamine + ATP + H2O = CTP + L-glutamate + ADP + phosphate + 2 H(+)</text>
        <dbReference type="Rhea" id="RHEA:26426"/>
        <dbReference type="ChEBI" id="CHEBI:15377"/>
        <dbReference type="ChEBI" id="CHEBI:15378"/>
        <dbReference type="ChEBI" id="CHEBI:29985"/>
        <dbReference type="ChEBI" id="CHEBI:30616"/>
        <dbReference type="ChEBI" id="CHEBI:37563"/>
        <dbReference type="ChEBI" id="CHEBI:43474"/>
        <dbReference type="ChEBI" id="CHEBI:46398"/>
        <dbReference type="ChEBI" id="CHEBI:58359"/>
        <dbReference type="ChEBI" id="CHEBI:456216"/>
        <dbReference type="EC" id="6.3.4.2"/>
    </reaction>
</comment>
<comment type="catalytic activity">
    <reaction evidence="1">
        <text>L-glutamine + H2O = L-glutamate + NH4(+)</text>
        <dbReference type="Rhea" id="RHEA:15889"/>
        <dbReference type="ChEBI" id="CHEBI:15377"/>
        <dbReference type="ChEBI" id="CHEBI:28938"/>
        <dbReference type="ChEBI" id="CHEBI:29985"/>
        <dbReference type="ChEBI" id="CHEBI:58359"/>
    </reaction>
</comment>
<comment type="catalytic activity">
    <reaction evidence="1">
        <text>UTP + NH4(+) + ATP = CTP + ADP + phosphate + 2 H(+)</text>
        <dbReference type="Rhea" id="RHEA:16597"/>
        <dbReference type="ChEBI" id="CHEBI:15378"/>
        <dbReference type="ChEBI" id="CHEBI:28938"/>
        <dbReference type="ChEBI" id="CHEBI:30616"/>
        <dbReference type="ChEBI" id="CHEBI:37563"/>
        <dbReference type="ChEBI" id="CHEBI:43474"/>
        <dbReference type="ChEBI" id="CHEBI:46398"/>
        <dbReference type="ChEBI" id="CHEBI:456216"/>
    </reaction>
</comment>
<comment type="activity regulation">
    <text evidence="1">Allosterically activated by GTP, when glutamine is the substrate; GTP has no effect on the reaction when ammonia is the substrate. The allosteric effector GTP functions by stabilizing the protein conformation that binds the tetrahedral intermediate(s) formed during glutamine hydrolysis. Inhibited by the product CTP, via allosteric rather than competitive inhibition.</text>
</comment>
<comment type="pathway">
    <text evidence="1">Pyrimidine metabolism; CTP biosynthesis via de novo pathway; CTP from UDP: step 2/2.</text>
</comment>
<comment type="subunit">
    <text evidence="1">Homotetramer.</text>
</comment>
<comment type="miscellaneous">
    <text evidence="1">CTPSs have evolved a hybrid strategy for distinguishing between UTP and CTP. The overlapping regions of the product feedback inhibitory and substrate sites recognize a common feature in both compounds, the triphosphate moiety. To differentiate isosteric substrate and product pyrimidine rings, an additional pocket far from the expected kinase/ligase catalytic site, specifically recognizes the cytosine and ribose portions of the product inhibitor.</text>
</comment>
<comment type="similarity">
    <text evidence="1">Belongs to the CTP synthase family.</text>
</comment>
<name>PYRG_CARHZ</name>
<sequence>MTKFIFVTGGVVSSLGKGITAASLGRLLKSRGLKVAIQKFDPYINVDPGTMSPYQHGEVFVTDDGAETDLDLGHYERFIDINLTKNSNVTTGKVYWAVISKERRGDYLGGTVQVIPHITNEIKERILRVAKESNPDVVITEIGGTVGDIESLPFLEAIRQLKNDVGKDNVLYIHVTLVPTLRVTGELKTKPTQHSVKELRSIGIQPDIIVARSEQPLSREITEKIALFCDIDKNAVIQAVDASNIYEVPLKLKEEGLDDIVIKKLGLTCGEPDLSEWEQIVERYKNPKFEVTIGIVGKYVSLPDAYLSVAEALRHAGIYHETRVNIRWIDSEMLEKEPVEKYLSNLDGILVPGGFGDRGVEGKIKAIQYARENKVPYLGLCLGMQTAVIEFARNVAGLKDANSSEFKPDGPHSVIDLLPEQKEVEQLGGTMRLGLYPCKLVPGTKAHAAYGEEIIYERHRHRYEFNNEYRELLTGLGLVISGTSPDGRLVEIIELSDHPWFVATQFHPEFKSRPNRPHPLFREFIGASLKTNKLF</sequence>
<proteinExistence type="inferred from homology"/>
<organism>
    <name type="scientific">Carboxydothermus hydrogenoformans (strain ATCC BAA-161 / DSM 6008 / Z-2901)</name>
    <dbReference type="NCBI Taxonomy" id="246194"/>
    <lineage>
        <taxon>Bacteria</taxon>
        <taxon>Bacillati</taxon>
        <taxon>Bacillota</taxon>
        <taxon>Clostridia</taxon>
        <taxon>Thermoanaerobacterales</taxon>
        <taxon>Thermoanaerobacteraceae</taxon>
        <taxon>Carboxydothermus</taxon>
    </lineage>
</organism>
<reference key="1">
    <citation type="journal article" date="2005" name="PLoS Genet.">
        <title>Life in hot carbon monoxide: the complete genome sequence of Carboxydothermus hydrogenoformans Z-2901.</title>
        <authorList>
            <person name="Wu M."/>
            <person name="Ren Q."/>
            <person name="Durkin A.S."/>
            <person name="Daugherty S.C."/>
            <person name="Brinkac L.M."/>
            <person name="Dodson R.J."/>
            <person name="Madupu R."/>
            <person name="Sullivan S.A."/>
            <person name="Kolonay J.F."/>
            <person name="Nelson W.C."/>
            <person name="Tallon L.J."/>
            <person name="Jones K.M."/>
            <person name="Ulrich L.E."/>
            <person name="Gonzalez J.M."/>
            <person name="Zhulin I.B."/>
            <person name="Robb F.T."/>
            <person name="Eisen J.A."/>
        </authorList>
    </citation>
    <scope>NUCLEOTIDE SEQUENCE [LARGE SCALE GENOMIC DNA]</scope>
    <source>
        <strain>ATCC BAA-161 / DSM 6008 / Z-2901</strain>
    </source>
</reference>
<protein>
    <recommendedName>
        <fullName evidence="1">CTP synthase</fullName>
        <ecNumber evidence="1">6.3.4.2</ecNumber>
    </recommendedName>
    <alternativeName>
        <fullName evidence="1">Cytidine 5'-triphosphate synthase</fullName>
    </alternativeName>
    <alternativeName>
        <fullName evidence="1">Cytidine triphosphate synthetase</fullName>
        <shortName evidence="1">CTP synthetase</shortName>
        <shortName evidence="1">CTPS</shortName>
    </alternativeName>
    <alternativeName>
        <fullName evidence="1">UTP--ammonia ligase</fullName>
    </alternativeName>
</protein>
<gene>
    <name evidence="1" type="primary">pyrG</name>
    <name type="ordered locus">CHY_0125</name>
</gene>